<comment type="function">
    <text evidence="1 2 3">Is involved in the catabolism of quinate. Allows the utilization of quinate as carbon source via the beta-ketoadipate pathway.</text>
</comment>
<comment type="catalytic activity">
    <reaction evidence="1">
        <text>3-dehydroquinate = 3-dehydroshikimate + H2O</text>
        <dbReference type="Rhea" id="RHEA:21096"/>
        <dbReference type="ChEBI" id="CHEBI:15377"/>
        <dbReference type="ChEBI" id="CHEBI:16630"/>
        <dbReference type="ChEBI" id="CHEBI:32364"/>
        <dbReference type="EC" id="4.2.1.10"/>
    </reaction>
</comment>
<comment type="biophysicochemical properties">
    <kinetics>
        <KM evidence="2 3">147 uM for 3-dehydroquinate</KM>
    </kinetics>
</comment>
<comment type="pathway">
    <text evidence="1">Aromatic compound metabolism; 3,4-dihydroxybenzoate biosynthesis; 3,4-dihydroxybenzoate from 3-dehydroquinate: step 1/2.</text>
</comment>
<comment type="subunit">
    <text evidence="1">Homododecamer. Adopts a ring-like structure, composed of an arrangement of two hexameric rings stacked on top of one another.</text>
</comment>
<comment type="similarity">
    <text evidence="1">Belongs to the type-II 3-dehydroquinase family.</text>
</comment>
<sequence>MEKSILLINGPNLNLLGTREPHIYGSTTLSDVEESSKGHAASLGASLQTFQSNHEGAIVDRIHAARGNTDAIIINPGAYTHTSVAIRDALLGVEIPFIELHVSNVHAREPFRHHSYFSDKASGIIVGLGVYGYKVAVEHVALNFKPLEKKAAL</sequence>
<accession>P05147</accession>
<accession>C8VTB2</accession>
<accession>Q5BE95</accession>
<reference key="1">
    <citation type="journal article" date="1988" name="Mol. Gen. Genet.">
        <title>Molecular organisation of the quinic acid utilization (QUT) gene cluster in Aspergillus nidulans.</title>
        <authorList>
            <person name="Hawkins A.R."/>
            <person name="Lamb H.K."/>
            <person name="Smith M."/>
            <person name="Keyte J.W."/>
            <person name="Roberts C.F."/>
        </authorList>
    </citation>
    <scope>NUCLEOTIDE SEQUENCE [GENOMIC DNA]</scope>
</reference>
<reference key="2">
    <citation type="journal article" date="1986" name="Biochem. J.">
        <title>Sequence analysis and transformation by the catabolic 3-dehydroquinase (QUTE) gene from Aspergillus nidulans.</title>
        <authorList>
            <person name="da Silva A.J.F."/>
            <person name="Whittington H."/>
            <person name="Clements J."/>
            <person name="Roberts C.F."/>
            <person name="Hawkins A.R."/>
        </authorList>
    </citation>
    <scope>NUCLEOTIDE SEQUENCE [GENOMIC DNA]</scope>
    <source>
        <strain>R153</strain>
    </source>
</reference>
<reference key="3">
    <citation type="submission" date="1987-04" db="EMBL/GenBank/DDBJ databases">
        <authorList>
            <person name="Hawkins A.R."/>
        </authorList>
    </citation>
    <scope>SEQUENCE REVISION</scope>
</reference>
<reference key="4">
    <citation type="journal article" date="2005" name="Nature">
        <title>Sequencing of Aspergillus nidulans and comparative analysis with A. fumigatus and A. oryzae.</title>
        <authorList>
            <person name="Galagan J.E."/>
            <person name="Calvo S.E."/>
            <person name="Cuomo C."/>
            <person name="Ma L.-J."/>
            <person name="Wortman J.R."/>
            <person name="Batzoglou S."/>
            <person name="Lee S.-I."/>
            <person name="Bastuerkmen M."/>
            <person name="Spevak C.C."/>
            <person name="Clutterbuck J."/>
            <person name="Kapitonov V."/>
            <person name="Jurka J."/>
            <person name="Scazzocchio C."/>
            <person name="Farman M.L."/>
            <person name="Butler J."/>
            <person name="Purcell S."/>
            <person name="Harris S."/>
            <person name="Braus G.H."/>
            <person name="Draht O."/>
            <person name="Busch S."/>
            <person name="D'Enfert C."/>
            <person name="Bouchier C."/>
            <person name="Goldman G.H."/>
            <person name="Bell-Pedersen D."/>
            <person name="Griffiths-Jones S."/>
            <person name="Doonan J.H."/>
            <person name="Yu J."/>
            <person name="Vienken K."/>
            <person name="Pain A."/>
            <person name="Freitag M."/>
            <person name="Selker E.U."/>
            <person name="Archer D.B."/>
            <person name="Penalva M.A."/>
            <person name="Oakley B.R."/>
            <person name="Momany M."/>
            <person name="Tanaka T."/>
            <person name="Kumagai T."/>
            <person name="Asai K."/>
            <person name="Machida M."/>
            <person name="Nierman W.C."/>
            <person name="Denning D.W."/>
            <person name="Caddick M.X."/>
            <person name="Hynes M."/>
            <person name="Paoletti M."/>
            <person name="Fischer R."/>
            <person name="Miller B.L."/>
            <person name="Dyer P.S."/>
            <person name="Sachs M.S."/>
            <person name="Osmani S.A."/>
            <person name="Birren B.W."/>
        </authorList>
    </citation>
    <scope>NUCLEOTIDE SEQUENCE [LARGE SCALE GENOMIC DNA]</scope>
    <source>
        <strain>FGSC A4 / ATCC 38163 / CBS 112.46 / NRRL 194 / M139</strain>
    </source>
</reference>
<reference key="5">
    <citation type="journal article" date="2009" name="Fungal Genet. Biol.">
        <title>The 2008 update of the Aspergillus nidulans genome annotation: a community effort.</title>
        <authorList>
            <person name="Wortman J.R."/>
            <person name="Gilsenan J.M."/>
            <person name="Joardar V."/>
            <person name="Deegan J."/>
            <person name="Clutterbuck J."/>
            <person name="Andersen M.R."/>
            <person name="Archer D."/>
            <person name="Bencina M."/>
            <person name="Braus G."/>
            <person name="Coutinho P."/>
            <person name="von Dohren H."/>
            <person name="Doonan J."/>
            <person name="Driessen A.J."/>
            <person name="Durek P."/>
            <person name="Espeso E."/>
            <person name="Fekete E."/>
            <person name="Flipphi M."/>
            <person name="Estrada C.G."/>
            <person name="Geysens S."/>
            <person name="Goldman G."/>
            <person name="de Groot P.W."/>
            <person name="Hansen K."/>
            <person name="Harris S.D."/>
            <person name="Heinekamp T."/>
            <person name="Helmstaedt K."/>
            <person name="Henrissat B."/>
            <person name="Hofmann G."/>
            <person name="Homan T."/>
            <person name="Horio T."/>
            <person name="Horiuchi H."/>
            <person name="James S."/>
            <person name="Jones M."/>
            <person name="Karaffa L."/>
            <person name="Karanyi Z."/>
            <person name="Kato M."/>
            <person name="Keller N."/>
            <person name="Kelly D.E."/>
            <person name="Kiel J.A."/>
            <person name="Kim J.M."/>
            <person name="van der Klei I.J."/>
            <person name="Klis F.M."/>
            <person name="Kovalchuk A."/>
            <person name="Krasevec N."/>
            <person name="Kubicek C.P."/>
            <person name="Liu B."/>
            <person name="Maccabe A."/>
            <person name="Meyer V."/>
            <person name="Mirabito P."/>
            <person name="Miskei M."/>
            <person name="Mos M."/>
            <person name="Mullins J."/>
            <person name="Nelson D.R."/>
            <person name="Nielsen J."/>
            <person name="Oakley B.R."/>
            <person name="Osmani S.A."/>
            <person name="Pakula T."/>
            <person name="Paszewski A."/>
            <person name="Paulsen I."/>
            <person name="Pilsyk S."/>
            <person name="Pocsi I."/>
            <person name="Punt P.J."/>
            <person name="Ram A.F."/>
            <person name="Ren Q."/>
            <person name="Robellet X."/>
            <person name="Robson G."/>
            <person name="Seiboth B."/>
            <person name="van Solingen P."/>
            <person name="Specht T."/>
            <person name="Sun J."/>
            <person name="Taheri-Talesh N."/>
            <person name="Takeshita N."/>
            <person name="Ussery D."/>
            <person name="vanKuyk P.A."/>
            <person name="Visser H."/>
            <person name="van de Vondervoort P.J."/>
            <person name="de Vries R.P."/>
            <person name="Walton J."/>
            <person name="Xiang X."/>
            <person name="Xiong Y."/>
            <person name="Zeng A.P."/>
            <person name="Brandt B.W."/>
            <person name="Cornell M.J."/>
            <person name="van den Hondel C.A."/>
            <person name="Visser J."/>
            <person name="Oliver S.G."/>
            <person name="Turner G."/>
        </authorList>
    </citation>
    <scope>GENOME REANNOTATION</scope>
    <source>
        <strain>FGSC A4 / ATCC 38163 / CBS 112.46 / NRRL 194 / M139</strain>
    </source>
</reference>
<reference key="6">
    <citation type="journal article" date="1992" name="Biochem. J.">
        <title>A comparison of the enzymological and biophysical properties of two distinct classes of dehydroquinase enzymes.</title>
        <authorList>
            <person name="Kleanthous C."/>
            <person name="Deka R."/>
            <person name="Davis K."/>
            <person name="Kelly S.M."/>
            <person name="Cooper A."/>
            <person name="Harding S.E."/>
            <person name="Price N.C."/>
            <person name="Hawkins A.R."/>
            <person name="Coggins J.R."/>
        </authorList>
    </citation>
    <scope>FUNCTION</scope>
    <scope>SUBUNIT</scope>
    <scope>BIOPHYSICOCHEMICAL PROPERTIES</scope>
</reference>
<reference key="7">
    <citation type="journal article" date="1992" name="Biochem. J.">
        <authorList>
            <person name="Kleanthous C."/>
            <person name="Deka R."/>
            <person name="Davis K."/>
            <person name="Kelly S.M."/>
            <person name="Cooper A."/>
            <person name="Harding S.E."/>
            <person name="Price N.C."/>
            <person name="Hawkins A.R."/>
            <person name="Coggins J.R."/>
        </authorList>
    </citation>
    <scope>ERRATUM OF PUBMED:1554351</scope>
</reference>
<reference key="8">
    <citation type="journal article" date="1996" name="Biochem. J.">
        <title>Conformational changes and the role of metals in the mechanism of type II dehydroquinase from Aspergillus nidulans.</title>
        <authorList>
            <person name="Bottomley J.R."/>
            <person name="Hawkins A.R."/>
            <person name="Kleanthous C."/>
        </authorList>
    </citation>
    <scope>FUNCTION</scope>
    <scope>SUBUNIT</scope>
    <scope>BIOPHYSICOCHEMICAL PROPERTIES</scope>
</reference>
<gene>
    <name evidence="1" type="primary">qutE</name>
    <name type="ORF">AN1135</name>
</gene>
<dbReference type="EC" id="4.2.1.10" evidence="1"/>
<dbReference type="EMBL" id="X13525">
    <property type="protein sequence ID" value="CAA31881.1"/>
    <property type="molecule type" value="Genomic_DNA"/>
</dbReference>
<dbReference type="EMBL" id="X04696">
    <property type="protein sequence ID" value="CAA28401.1"/>
    <property type="molecule type" value="Genomic_DNA"/>
</dbReference>
<dbReference type="EMBL" id="AACD01000016">
    <property type="protein sequence ID" value="EAA66253.1"/>
    <property type="molecule type" value="Genomic_DNA"/>
</dbReference>
<dbReference type="EMBL" id="BN001308">
    <property type="protein sequence ID" value="CBF88074.1"/>
    <property type="molecule type" value="Genomic_DNA"/>
</dbReference>
<dbReference type="PIR" id="S08501">
    <property type="entry name" value="S08501"/>
</dbReference>
<dbReference type="RefSeq" id="XP_658739.1">
    <property type="nucleotide sequence ID" value="XM_653647.1"/>
</dbReference>
<dbReference type="SMR" id="P05147"/>
<dbReference type="STRING" id="227321.P05147"/>
<dbReference type="EnsemblFungi" id="CBF88074">
    <property type="protein sequence ID" value="CBF88074"/>
    <property type="gene ID" value="ANIA_01135"/>
</dbReference>
<dbReference type="KEGG" id="ani:ANIA_01135"/>
<dbReference type="VEuPathDB" id="FungiDB:AN1135"/>
<dbReference type="eggNOG" id="ENOG502S1A9">
    <property type="taxonomic scope" value="Eukaryota"/>
</dbReference>
<dbReference type="HOGENOM" id="CLU_090968_1_0_1"/>
<dbReference type="InParanoid" id="P05147"/>
<dbReference type="OMA" id="AYTHYSY"/>
<dbReference type="OrthoDB" id="8191625at2759"/>
<dbReference type="UniPathway" id="UPA00088">
    <property type="reaction ID" value="UER00178"/>
</dbReference>
<dbReference type="Proteomes" id="UP000000560">
    <property type="component" value="Chromosome VIII"/>
</dbReference>
<dbReference type="GO" id="GO:0003855">
    <property type="term" value="F:3-dehydroquinate dehydratase activity"/>
    <property type="evidence" value="ECO:0000314"/>
    <property type="project" value="AspGD"/>
</dbReference>
<dbReference type="GO" id="GO:0046279">
    <property type="term" value="P:3,4-dihydroxybenzoate biosynthetic process"/>
    <property type="evidence" value="ECO:0007669"/>
    <property type="project" value="UniProtKB-UniRule"/>
</dbReference>
<dbReference type="GO" id="GO:0019631">
    <property type="term" value="P:quinate catabolic process"/>
    <property type="evidence" value="ECO:0000315"/>
    <property type="project" value="AspGD"/>
</dbReference>
<dbReference type="CDD" id="cd00466">
    <property type="entry name" value="DHQase_II"/>
    <property type="match status" value="1"/>
</dbReference>
<dbReference type="Gene3D" id="3.40.50.9100">
    <property type="entry name" value="Dehydroquinase, class II"/>
    <property type="match status" value="1"/>
</dbReference>
<dbReference type="HAMAP" id="MF_00169">
    <property type="entry name" value="AroQ"/>
    <property type="match status" value="1"/>
</dbReference>
<dbReference type="InterPro" id="IPR001874">
    <property type="entry name" value="DHquinase_II"/>
</dbReference>
<dbReference type="InterPro" id="IPR018509">
    <property type="entry name" value="DHquinase_II_CS"/>
</dbReference>
<dbReference type="InterPro" id="IPR036441">
    <property type="entry name" value="DHquinase_II_sf"/>
</dbReference>
<dbReference type="NCBIfam" id="TIGR01088">
    <property type="entry name" value="aroQ"/>
    <property type="match status" value="1"/>
</dbReference>
<dbReference type="NCBIfam" id="NF003804">
    <property type="entry name" value="PRK05395.1-1"/>
    <property type="match status" value="1"/>
</dbReference>
<dbReference type="NCBIfam" id="NF003805">
    <property type="entry name" value="PRK05395.1-2"/>
    <property type="match status" value="1"/>
</dbReference>
<dbReference type="NCBIfam" id="NF003806">
    <property type="entry name" value="PRK05395.1-3"/>
    <property type="match status" value="1"/>
</dbReference>
<dbReference type="NCBIfam" id="NF003807">
    <property type="entry name" value="PRK05395.1-4"/>
    <property type="match status" value="1"/>
</dbReference>
<dbReference type="PANTHER" id="PTHR21272">
    <property type="entry name" value="CATABOLIC 3-DEHYDROQUINASE"/>
    <property type="match status" value="1"/>
</dbReference>
<dbReference type="PANTHER" id="PTHR21272:SF5">
    <property type="entry name" value="CATABOLIC 3-DEHYDROQUINASE"/>
    <property type="match status" value="1"/>
</dbReference>
<dbReference type="Pfam" id="PF01220">
    <property type="entry name" value="DHquinase_II"/>
    <property type="match status" value="1"/>
</dbReference>
<dbReference type="PIRSF" id="PIRSF001399">
    <property type="entry name" value="DHquinase_II"/>
    <property type="match status" value="1"/>
</dbReference>
<dbReference type="SUPFAM" id="SSF52304">
    <property type="entry name" value="Type II 3-dehydroquinate dehydratase"/>
    <property type="match status" value="1"/>
</dbReference>
<dbReference type="PROSITE" id="PS01029">
    <property type="entry name" value="DEHYDROQUINASE_II"/>
    <property type="match status" value="1"/>
</dbReference>
<keyword id="KW-0456">Lyase</keyword>
<keyword id="KW-0672">Quinate metabolism</keyword>
<keyword id="KW-1185">Reference proteome</keyword>
<proteinExistence type="evidence at protein level"/>
<protein>
    <recommendedName>
        <fullName evidence="1">Catabolic 3-dehydroquinase</fullName>
        <shortName evidence="1">cDHQase</shortName>
        <ecNumber evidence="1">4.2.1.10</ecNumber>
    </recommendedName>
    <alternativeName>
        <fullName evidence="1">3-dehydroquinate dehydratase</fullName>
    </alternativeName>
</protein>
<name>3DHQ_EMENI</name>
<feature type="chain" id="PRO_0000159947" description="Catabolic 3-dehydroquinase">
    <location>
        <begin position="1"/>
        <end position="153"/>
    </location>
</feature>
<feature type="active site" description="Proton acceptor" evidence="1">
    <location>
        <position position="24"/>
    </location>
</feature>
<feature type="active site" description="Proton donor" evidence="1">
    <location>
        <position position="101"/>
    </location>
</feature>
<feature type="binding site" evidence="1">
    <location>
        <position position="75"/>
    </location>
    <ligand>
        <name>substrate</name>
    </ligand>
</feature>
<feature type="binding site" evidence="1">
    <location>
        <position position="81"/>
    </location>
    <ligand>
        <name>substrate</name>
    </ligand>
</feature>
<feature type="binding site" evidence="1">
    <location>
        <position position="88"/>
    </location>
    <ligand>
        <name>substrate</name>
    </ligand>
</feature>
<feature type="binding site" evidence="1">
    <location>
        <begin position="102"/>
        <end position="103"/>
    </location>
    <ligand>
        <name>substrate</name>
    </ligand>
</feature>
<feature type="binding site" evidence="1">
    <location>
        <position position="112"/>
    </location>
    <ligand>
        <name>substrate</name>
    </ligand>
</feature>
<feature type="site" description="Transition state stabilizer" evidence="1">
    <location>
        <position position="19"/>
    </location>
</feature>
<feature type="sequence conflict" description="In Ref. 1; CAA31881." evidence="4" ref="1">
    <original>D</original>
    <variation>E</variation>
    <location>
        <position position="60"/>
    </location>
</feature>
<organism>
    <name type="scientific">Emericella nidulans (strain FGSC A4 / ATCC 38163 / CBS 112.46 / NRRL 194 / M139)</name>
    <name type="common">Aspergillus nidulans</name>
    <dbReference type="NCBI Taxonomy" id="227321"/>
    <lineage>
        <taxon>Eukaryota</taxon>
        <taxon>Fungi</taxon>
        <taxon>Dikarya</taxon>
        <taxon>Ascomycota</taxon>
        <taxon>Pezizomycotina</taxon>
        <taxon>Eurotiomycetes</taxon>
        <taxon>Eurotiomycetidae</taxon>
        <taxon>Eurotiales</taxon>
        <taxon>Aspergillaceae</taxon>
        <taxon>Aspergillus</taxon>
        <taxon>Aspergillus subgen. Nidulantes</taxon>
    </lineage>
</organism>
<evidence type="ECO:0000255" key="1">
    <source>
        <dbReference type="HAMAP-Rule" id="MF_03136"/>
    </source>
</evidence>
<evidence type="ECO:0000269" key="2">
    <source>
    </source>
</evidence>
<evidence type="ECO:0000269" key="3">
    <source>
    </source>
</evidence>
<evidence type="ECO:0000305" key="4"/>